<dbReference type="EC" id="2.7.7.7" evidence="1"/>
<dbReference type="EMBL" id="AM920689">
    <property type="protein sequence ID" value="CAP52609.1"/>
    <property type="molecule type" value="Genomic_DNA"/>
</dbReference>
<dbReference type="SMR" id="B0RY89"/>
<dbReference type="KEGG" id="xca:xcc-b100_3244"/>
<dbReference type="HOGENOM" id="CLU_001600_4_0_6"/>
<dbReference type="Proteomes" id="UP000001188">
    <property type="component" value="Chromosome"/>
</dbReference>
<dbReference type="GO" id="GO:0005737">
    <property type="term" value="C:cytoplasm"/>
    <property type="evidence" value="ECO:0007669"/>
    <property type="project" value="UniProtKB-SubCell"/>
</dbReference>
<dbReference type="GO" id="GO:0008408">
    <property type="term" value="F:3'-5' exonuclease activity"/>
    <property type="evidence" value="ECO:0007669"/>
    <property type="project" value="InterPro"/>
</dbReference>
<dbReference type="GO" id="GO:0003887">
    <property type="term" value="F:DNA-directed DNA polymerase activity"/>
    <property type="evidence" value="ECO:0007669"/>
    <property type="project" value="UniProtKB-UniRule"/>
</dbReference>
<dbReference type="GO" id="GO:0003676">
    <property type="term" value="F:nucleic acid binding"/>
    <property type="evidence" value="ECO:0007669"/>
    <property type="project" value="InterPro"/>
</dbReference>
<dbReference type="GO" id="GO:0006281">
    <property type="term" value="P:DNA repair"/>
    <property type="evidence" value="ECO:0007669"/>
    <property type="project" value="UniProtKB-UniRule"/>
</dbReference>
<dbReference type="GO" id="GO:0006260">
    <property type="term" value="P:DNA replication"/>
    <property type="evidence" value="ECO:0007669"/>
    <property type="project" value="UniProtKB-KW"/>
</dbReference>
<dbReference type="CDD" id="cd04485">
    <property type="entry name" value="DnaE_OBF"/>
    <property type="match status" value="1"/>
</dbReference>
<dbReference type="CDD" id="cd07434">
    <property type="entry name" value="PHP_PolIIIA_DnaE2"/>
    <property type="match status" value="1"/>
</dbReference>
<dbReference type="Gene3D" id="1.10.150.870">
    <property type="match status" value="1"/>
</dbReference>
<dbReference type="Gene3D" id="3.20.20.140">
    <property type="entry name" value="Metal-dependent hydrolases"/>
    <property type="match status" value="1"/>
</dbReference>
<dbReference type="HAMAP" id="MF_01902">
    <property type="entry name" value="DNApol_error_prone"/>
    <property type="match status" value="1"/>
</dbReference>
<dbReference type="InterPro" id="IPR011708">
    <property type="entry name" value="DNA_pol3_alpha_NTPase_dom"/>
</dbReference>
<dbReference type="InterPro" id="IPR040982">
    <property type="entry name" value="DNA_pol3_finger"/>
</dbReference>
<dbReference type="InterPro" id="IPR023073">
    <property type="entry name" value="DnaE2"/>
</dbReference>
<dbReference type="InterPro" id="IPR004805">
    <property type="entry name" value="DnaE2/DnaE/PolC"/>
</dbReference>
<dbReference type="InterPro" id="IPR029460">
    <property type="entry name" value="DNAPol_HHH"/>
</dbReference>
<dbReference type="InterPro" id="IPR004365">
    <property type="entry name" value="NA-bd_OB_tRNA"/>
</dbReference>
<dbReference type="InterPro" id="IPR004013">
    <property type="entry name" value="PHP_dom"/>
</dbReference>
<dbReference type="InterPro" id="IPR003141">
    <property type="entry name" value="Pol/His_phosphatase_N"/>
</dbReference>
<dbReference type="InterPro" id="IPR016195">
    <property type="entry name" value="Pol/histidinol_Pase-like"/>
</dbReference>
<dbReference type="NCBIfam" id="TIGR00594">
    <property type="entry name" value="polc"/>
    <property type="match status" value="1"/>
</dbReference>
<dbReference type="NCBIfam" id="NF004225">
    <property type="entry name" value="PRK05672.1"/>
    <property type="match status" value="1"/>
</dbReference>
<dbReference type="PANTHER" id="PTHR32294">
    <property type="entry name" value="DNA POLYMERASE III SUBUNIT ALPHA"/>
    <property type="match status" value="1"/>
</dbReference>
<dbReference type="PANTHER" id="PTHR32294:SF4">
    <property type="entry name" value="ERROR-PRONE DNA POLYMERASE"/>
    <property type="match status" value="1"/>
</dbReference>
<dbReference type="Pfam" id="PF07733">
    <property type="entry name" value="DNA_pol3_alpha"/>
    <property type="match status" value="1"/>
</dbReference>
<dbReference type="Pfam" id="PF17657">
    <property type="entry name" value="DNA_pol3_finger"/>
    <property type="match status" value="1"/>
</dbReference>
<dbReference type="Pfam" id="PF14579">
    <property type="entry name" value="HHH_6"/>
    <property type="match status" value="1"/>
</dbReference>
<dbReference type="Pfam" id="PF02811">
    <property type="entry name" value="PHP"/>
    <property type="match status" value="1"/>
</dbReference>
<dbReference type="Pfam" id="PF01336">
    <property type="entry name" value="tRNA_anti-codon"/>
    <property type="match status" value="1"/>
</dbReference>
<dbReference type="SMART" id="SM00481">
    <property type="entry name" value="POLIIIAc"/>
    <property type="match status" value="1"/>
</dbReference>
<dbReference type="SUPFAM" id="SSF89550">
    <property type="entry name" value="PHP domain-like"/>
    <property type="match status" value="1"/>
</dbReference>
<accession>B0RY89</accession>
<sequence length="1082" mass="120243">MSWDDAIDGVDRDTPGGRMPRGWTVAARLRAANDDITHAAVADTLPAYAELHCLSDFSFLRGASSAEQLFARAHHCGYSALAITDECSLAGIVRGLEASRATGVRLIVGSEFTLIDCTRFVLLVENAHGYPQLCSVITTGRRAAGKGAYRLGRAEVEAHFRDVVPGVFALWLPGDQPQAEQGAWLQRVFAERAFLAVELHREQDDAARLQALQALAQQLGMSALASGDVHMAQRRDRIVQDTLTAIRHTLPLADCGAHLFRNGERHLRPRRALGNIYPHALLQASVELAQRCTFDLSKVQYTYPRELVPQGHTPASYLRQLTEAGMRERWPEGAPANVVAQIDSELELIAYKGYEAFFLTVQDVVRFARAQHILCQGRGSSANSAVCYALGITAVNPSETRLLMARFLSKERDEPPDIDVDFEHERREEVLQYVYTKYGRERAALAATVICYRGKSAVRDVAKAFGLPPDQIALLANCYGWGNGDTPMEQRIAEAGFDLANPLINKILAVTEHLRDHPRHLSQHVGGFVISDEPLSMLVPVENAAMADRTIIQWDKDDLETMQLLKVDCLALGMLTCIRKTLDLVRGHRGRDYTIATLPGEDAATYKMIQRADTVGVFQIESRAQMAMLPRLKPREFYDLVIEVAIVRPGPIQGDMVHPYLRRRQGYEPVSFPSPGVEEILGRTLGIPLFQEQVMELVIHAGYTDSEADQLRRSMAAWRRGGDMEPHRVRIRELMAGRGYAPEFIDQIFEQIKGFGSYGFPQSHAASFAKLVYASCWLKRHEPAAFACGLLNAQPMGFYSASQIVQDARRGSPERQRVEVLPVDVLHSDWDNILVGGRPWHSDADPGEQPAIRLGLRQVSGLSEKVVERIVAARAQRPFADIGDLCLRAALDEKARLALAEAGALQSMVGNRNAARWAMAGVEARRPLLPGSPAERAVELPAPRAGEEILADYRAVGLSLRQHPMALLRPQMLQRRILGLRELQARRHGSGVHVAGLVTQRQRPATAKGTIFVTLEDEHGMINVIVWSHLAMRRRRALLESRLLAVRGRWERVDGVEHLIAGDLYDLSDLLGEMQLPSRDFH</sequence>
<comment type="function">
    <text evidence="1">DNA polymerase involved in damage-induced mutagenesis and translesion synthesis (TLS). It is not the major replicative DNA polymerase.</text>
</comment>
<comment type="catalytic activity">
    <reaction evidence="1">
        <text>DNA(n) + a 2'-deoxyribonucleoside 5'-triphosphate = DNA(n+1) + diphosphate</text>
        <dbReference type="Rhea" id="RHEA:22508"/>
        <dbReference type="Rhea" id="RHEA-COMP:17339"/>
        <dbReference type="Rhea" id="RHEA-COMP:17340"/>
        <dbReference type="ChEBI" id="CHEBI:33019"/>
        <dbReference type="ChEBI" id="CHEBI:61560"/>
        <dbReference type="ChEBI" id="CHEBI:173112"/>
        <dbReference type="EC" id="2.7.7.7"/>
    </reaction>
</comment>
<comment type="subcellular location">
    <subcellularLocation>
        <location evidence="1">Cytoplasm</location>
    </subcellularLocation>
</comment>
<comment type="similarity">
    <text evidence="1">Belongs to the DNA polymerase type-C family. DnaE2 subfamily.</text>
</comment>
<protein>
    <recommendedName>
        <fullName evidence="1">Error-prone DNA polymerase</fullName>
        <ecNumber evidence="1">2.7.7.7</ecNumber>
    </recommendedName>
</protein>
<keyword id="KW-0963">Cytoplasm</keyword>
<keyword id="KW-0227">DNA damage</keyword>
<keyword id="KW-0234">DNA repair</keyword>
<keyword id="KW-0235">DNA replication</keyword>
<keyword id="KW-0239">DNA-directed DNA polymerase</keyword>
<keyword id="KW-0548">Nucleotidyltransferase</keyword>
<keyword id="KW-0808">Transferase</keyword>
<gene>
    <name evidence="1" type="primary">dnaE2</name>
    <name type="ordered locus">xcc-b100_3244</name>
</gene>
<name>DNAE2_XANCB</name>
<feature type="chain" id="PRO_1000188734" description="Error-prone DNA polymerase">
    <location>
        <begin position="1"/>
        <end position="1082"/>
    </location>
</feature>
<reference key="1">
    <citation type="journal article" date="2008" name="J. Biotechnol.">
        <title>The genome of Xanthomonas campestris pv. campestris B100 and its use for the reconstruction of metabolic pathways involved in xanthan biosynthesis.</title>
        <authorList>
            <person name="Vorhoelter F.-J."/>
            <person name="Schneiker S."/>
            <person name="Goesmann A."/>
            <person name="Krause L."/>
            <person name="Bekel T."/>
            <person name="Kaiser O."/>
            <person name="Linke B."/>
            <person name="Patschkowski T."/>
            <person name="Rueckert C."/>
            <person name="Schmid J."/>
            <person name="Sidhu V.K."/>
            <person name="Sieber V."/>
            <person name="Tauch A."/>
            <person name="Watt S.A."/>
            <person name="Weisshaar B."/>
            <person name="Becker A."/>
            <person name="Niehaus K."/>
            <person name="Puehler A."/>
        </authorList>
    </citation>
    <scope>NUCLEOTIDE SEQUENCE [LARGE SCALE GENOMIC DNA]</scope>
    <source>
        <strain>B100</strain>
    </source>
</reference>
<organism>
    <name type="scientific">Xanthomonas campestris pv. campestris (strain B100)</name>
    <dbReference type="NCBI Taxonomy" id="509169"/>
    <lineage>
        <taxon>Bacteria</taxon>
        <taxon>Pseudomonadati</taxon>
        <taxon>Pseudomonadota</taxon>
        <taxon>Gammaproteobacteria</taxon>
        <taxon>Lysobacterales</taxon>
        <taxon>Lysobacteraceae</taxon>
        <taxon>Xanthomonas</taxon>
    </lineage>
</organism>
<evidence type="ECO:0000255" key="1">
    <source>
        <dbReference type="HAMAP-Rule" id="MF_01902"/>
    </source>
</evidence>
<proteinExistence type="inferred from homology"/>